<sequence>MEKSKAKQGENEHMPVNNPSTQIYQLQALASELKTGFTEAMQELTRIQHGEYALEEKVKSCRCSMEEKVTEMKNSLNYFKEELSNAMSMIQAITSKQEEMQQKIEQLQQEKRRESRKVKAKKAQKEEHGAQAGPASAPAPGSAPTQGSPFRSINVPEAGLPSDDFTNMLPSQNYEKAQESRSVHVGDSNVKGMMGPGVNPTTPESDENLKPSLSAEIQSKGHHTPGLWRQPKEGKEWGEEYVTKDHPDKLKDAGQGRHSSLENVLCETSLAAKRQTVALELLESERKYVINISLILKIKATFQGSDGKRNPKERSLFPGSLRYLVQQHLDLLHALQERVLKWPRQGVLGDLFLKLTNDENNFLDYYVAYLRDLPECISLVHVVVLKEGDEEIKSDIYTLFFHIVQRIPEYLIHLQNVLKFTEQEHPDYYLLLVCVQRLRVFISHYTLLFQCNEDLLIQKRKKLKKSSMAKLYKGLASQCANAGQDASPNAGQEAVHDSGVHSEEMLQPYPSSSSSAPAVSHLMAPAKKGQQQQSLMESMQPGKPGDWELEGRKHERPESLLAPAQFCAAEQDVKALAGPLQAIPEMDFEPSSAEPLGNVERSLRGPPELLPDARGFVPAGYEEFEYGGEIFALPAPYDEEPFQAPALFDNCSPASSESSLDICFLRPVSFAMEAERPEHALQPLPKSATSPASSSGAYKLEAAQAQAHGKAKPLSRSLKEFPRTPPAEGVAPRLYSTRSSSGGRAPLKVERAPAPHGPAAAAAASRGAPRTFFPQQRSQSEKQTYLEEMHLEDATRFCPKEERESEQTSFSDQNPRQDQKGGFRSSFRKLFKKKNGNSTGEDFCGPWGWW</sequence>
<dbReference type="EMBL" id="AC132910">
    <property type="status" value="NOT_ANNOTATED_CDS"/>
    <property type="molecule type" value="Genomic_DNA"/>
</dbReference>
<dbReference type="EMBL" id="AC161447">
    <property type="status" value="NOT_ANNOTATED_CDS"/>
    <property type="molecule type" value="Genomic_DNA"/>
</dbReference>
<dbReference type="EMBL" id="AK053944">
    <property type="protein sequence ID" value="BAC35600.2"/>
    <property type="molecule type" value="mRNA"/>
</dbReference>
<dbReference type="CCDS" id="CCDS50189.1">
    <molecule id="Q8BW86-1"/>
</dbReference>
<dbReference type="RefSeq" id="NP_001138924.1">
    <molecule id="Q8BW86-1"/>
    <property type="nucleotide sequence ID" value="NM_001145452.1"/>
</dbReference>
<dbReference type="RefSeq" id="XP_006524586.1">
    <molecule id="Q8BW86-1"/>
    <property type="nucleotide sequence ID" value="XM_006524523.5"/>
</dbReference>
<dbReference type="RefSeq" id="XP_006524587.1">
    <molecule id="Q8BW86-1"/>
    <property type="nucleotide sequence ID" value="XM_006524524.5"/>
</dbReference>
<dbReference type="RefSeq" id="XP_017173034.1">
    <molecule id="Q8BW86-1"/>
    <property type="nucleotide sequence ID" value="XM_017317545.3"/>
</dbReference>
<dbReference type="SMR" id="Q8BW86"/>
<dbReference type="FunCoup" id="Q8BW86">
    <property type="interactions" value="54"/>
</dbReference>
<dbReference type="IntAct" id="Q8BW86">
    <property type="interactions" value="1"/>
</dbReference>
<dbReference type="MINT" id="Q8BW86"/>
<dbReference type="STRING" id="10090.ENSMUSP00000063284"/>
<dbReference type="iPTMnet" id="Q8BW86"/>
<dbReference type="PhosphoSitePlus" id="Q8BW86"/>
<dbReference type="SwissPalm" id="Q8BW86"/>
<dbReference type="jPOST" id="Q8BW86"/>
<dbReference type="PaxDb" id="10090-ENSMUSP00000063284"/>
<dbReference type="PeptideAtlas" id="Q8BW86"/>
<dbReference type="ProteomicsDB" id="283258">
    <molecule id="Q8BW86-1"/>
</dbReference>
<dbReference type="ProteomicsDB" id="283259">
    <molecule id="Q8BW86-2"/>
</dbReference>
<dbReference type="Antibodypedia" id="49385">
    <property type="antibodies" value="58 antibodies from 12 providers"/>
</dbReference>
<dbReference type="Ensembl" id="ENSMUST00000068175.6">
    <molecule id="Q8BW86-1"/>
    <property type="protein sequence ID" value="ENSMUSP00000063284.6"/>
    <property type="gene ID" value="ENSMUSG00000054901.8"/>
</dbReference>
<dbReference type="Ensembl" id="ENSMUST00000223878.2">
    <molecule id="Q8BW86-1"/>
    <property type="protein sequence ID" value="ENSMUSP00000153224.2"/>
    <property type="gene ID" value="ENSMUSG00000054901.8"/>
</dbReference>
<dbReference type="GeneID" id="381112"/>
<dbReference type="KEGG" id="mmu:381112"/>
<dbReference type="UCSC" id="uc012axs.1">
    <molecule id="Q8BW86-1"/>
    <property type="organism name" value="mouse"/>
</dbReference>
<dbReference type="AGR" id="MGI:2685787"/>
<dbReference type="CTD" id="100271715"/>
<dbReference type="MGI" id="MGI:2685787">
    <property type="gene designation" value="Arhgef33"/>
</dbReference>
<dbReference type="VEuPathDB" id="HostDB:ENSMUSG00000054901"/>
<dbReference type="eggNOG" id="ENOG502RVY2">
    <property type="taxonomic scope" value="Eukaryota"/>
</dbReference>
<dbReference type="GeneTree" id="ENSGT00940000162759"/>
<dbReference type="HOGENOM" id="CLU_018772_0_0_1"/>
<dbReference type="InParanoid" id="Q8BW86"/>
<dbReference type="OMA" id="LEHANMV"/>
<dbReference type="OrthoDB" id="8828665at2759"/>
<dbReference type="PhylomeDB" id="Q8BW86"/>
<dbReference type="TreeFam" id="TF335627"/>
<dbReference type="Reactome" id="R-MMU-193648">
    <property type="pathway name" value="NRAGE signals death through JNK"/>
</dbReference>
<dbReference type="Reactome" id="R-MMU-416482">
    <property type="pathway name" value="G alpha (12/13) signalling events"/>
</dbReference>
<dbReference type="BioGRID-ORCS" id="381112">
    <property type="hits" value="3 hits in 77 CRISPR screens"/>
</dbReference>
<dbReference type="ChiTaRS" id="Arhgef33">
    <property type="organism name" value="mouse"/>
</dbReference>
<dbReference type="PRO" id="PR:Q8BW86"/>
<dbReference type="Proteomes" id="UP000000589">
    <property type="component" value="Chromosome 17"/>
</dbReference>
<dbReference type="RNAct" id="Q8BW86">
    <property type="molecule type" value="protein"/>
</dbReference>
<dbReference type="Bgee" id="ENSMUSG00000054901">
    <property type="expression patterns" value="Expressed in cerebellar cortex and 78 other cell types or tissues"/>
</dbReference>
<dbReference type="ExpressionAtlas" id="Q8BW86">
    <property type="expression patterns" value="baseline and differential"/>
</dbReference>
<dbReference type="GO" id="GO:0005085">
    <property type="term" value="F:guanyl-nucleotide exchange factor activity"/>
    <property type="evidence" value="ECO:0007669"/>
    <property type="project" value="UniProtKB-KW"/>
</dbReference>
<dbReference type="Gene3D" id="1.20.900.10">
    <property type="entry name" value="Dbl homology (DH) domain"/>
    <property type="match status" value="1"/>
</dbReference>
<dbReference type="InterPro" id="IPR042849">
    <property type="entry name" value="ARHGEF33"/>
</dbReference>
<dbReference type="InterPro" id="IPR035899">
    <property type="entry name" value="DBL_dom_sf"/>
</dbReference>
<dbReference type="InterPro" id="IPR000219">
    <property type="entry name" value="DH_dom"/>
</dbReference>
<dbReference type="PANTHER" id="PTHR46944">
    <property type="entry name" value="RHO GUANINE NUCLEOTIDE EXCHANGE FACTOR 33"/>
    <property type="match status" value="1"/>
</dbReference>
<dbReference type="PANTHER" id="PTHR46944:SF1">
    <property type="entry name" value="RHO GUANINE NUCLEOTIDE EXCHANGE FACTOR 33"/>
    <property type="match status" value="1"/>
</dbReference>
<dbReference type="Pfam" id="PF00621">
    <property type="entry name" value="RhoGEF"/>
    <property type="match status" value="1"/>
</dbReference>
<dbReference type="SMART" id="SM00325">
    <property type="entry name" value="RhoGEF"/>
    <property type="match status" value="1"/>
</dbReference>
<dbReference type="SUPFAM" id="SSF48065">
    <property type="entry name" value="DBL homology domain (DH-domain)"/>
    <property type="match status" value="1"/>
</dbReference>
<dbReference type="PROSITE" id="PS50010">
    <property type="entry name" value="DH_2"/>
    <property type="match status" value="1"/>
</dbReference>
<accession>Q8BW86</accession>
<reference key="1">
    <citation type="journal article" date="2009" name="PLoS Biol.">
        <title>Lineage-specific biology revealed by a finished genome assembly of the mouse.</title>
        <authorList>
            <person name="Church D.M."/>
            <person name="Goodstadt L."/>
            <person name="Hillier L.W."/>
            <person name="Zody M.C."/>
            <person name="Goldstein S."/>
            <person name="She X."/>
            <person name="Bult C.J."/>
            <person name="Agarwala R."/>
            <person name="Cherry J.L."/>
            <person name="DiCuccio M."/>
            <person name="Hlavina W."/>
            <person name="Kapustin Y."/>
            <person name="Meric P."/>
            <person name="Maglott D."/>
            <person name="Birtle Z."/>
            <person name="Marques A.C."/>
            <person name="Graves T."/>
            <person name="Zhou S."/>
            <person name="Teague B."/>
            <person name="Potamousis K."/>
            <person name="Churas C."/>
            <person name="Place M."/>
            <person name="Herschleb J."/>
            <person name="Runnheim R."/>
            <person name="Forrest D."/>
            <person name="Amos-Landgraf J."/>
            <person name="Schwartz D.C."/>
            <person name="Cheng Z."/>
            <person name="Lindblad-Toh K."/>
            <person name="Eichler E.E."/>
            <person name="Ponting C.P."/>
        </authorList>
    </citation>
    <scope>NUCLEOTIDE SEQUENCE [LARGE SCALE GENOMIC DNA]</scope>
    <source>
        <strain>C57BL/6J</strain>
    </source>
</reference>
<reference key="2">
    <citation type="journal article" date="2005" name="Science">
        <title>The transcriptional landscape of the mammalian genome.</title>
        <authorList>
            <person name="Carninci P."/>
            <person name="Kasukawa T."/>
            <person name="Katayama S."/>
            <person name="Gough J."/>
            <person name="Frith M.C."/>
            <person name="Maeda N."/>
            <person name="Oyama R."/>
            <person name="Ravasi T."/>
            <person name="Lenhard B."/>
            <person name="Wells C."/>
            <person name="Kodzius R."/>
            <person name="Shimokawa K."/>
            <person name="Bajic V.B."/>
            <person name="Brenner S.E."/>
            <person name="Batalov S."/>
            <person name="Forrest A.R."/>
            <person name="Zavolan M."/>
            <person name="Davis M.J."/>
            <person name="Wilming L.G."/>
            <person name="Aidinis V."/>
            <person name="Allen J.E."/>
            <person name="Ambesi-Impiombato A."/>
            <person name="Apweiler R."/>
            <person name="Aturaliya R.N."/>
            <person name="Bailey T.L."/>
            <person name="Bansal M."/>
            <person name="Baxter L."/>
            <person name="Beisel K.W."/>
            <person name="Bersano T."/>
            <person name="Bono H."/>
            <person name="Chalk A.M."/>
            <person name="Chiu K.P."/>
            <person name="Choudhary V."/>
            <person name="Christoffels A."/>
            <person name="Clutterbuck D.R."/>
            <person name="Crowe M.L."/>
            <person name="Dalla E."/>
            <person name="Dalrymple B.P."/>
            <person name="de Bono B."/>
            <person name="Della Gatta G."/>
            <person name="di Bernardo D."/>
            <person name="Down T."/>
            <person name="Engstrom P."/>
            <person name="Fagiolini M."/>
            <person name="Faulkner G."/>
            <person name="Fletcher C.F."/>
            <person name="Fukushima T."/>
            <person name="Furuno M."/>
            <person name="Futaki S."/>
            <person name="Gariboldi M."/>
            <person name="Georgii-Hemming P."/>
            <person name="Gingeras T.R."/>
            <person name="Gojobori T."/>
            <person name="Green R.E."/>
            <person name="Gustincich S."/>
            <person name="Harbers M."/>
            <person name="Hayashi Y."/>
            <person name="Hensch T.K."/>
            <person name="Hirokawa N."/>
            <person name="Hill D."/>
            <person name="Huminiecki L."/>
            <person name="Iacono M."/>
            <person name="Ikeo K."/>
            <person name="Iwama A."/>
            <person name="Ishikawa T."/>
            <person name="Jakt M."/>
            <person name="Kanapin A."/>
            <person name="Katoh M."/>
            <person name="Kawasawa Y."/>
            <person name="Kelso J."/>
            <person name="Kitamura H."/>
            <person name="Kitano H."/>
            <person name="Kollias G."/>
            <person name="Krishnan S.P."/>
            <person name="Kruger A."/>
            <person name="Kummerfeld S.K."/>
            <person name="Kurochkin I.V."/>
            <person name="Lareau L.F."/>
            <person name="Lazarevic D."/>
            <person name="Lipovich L."/>
            <person name="Liu J."/>
            <person name="Liuni S."/>
            <person name="McWilliam S."/>
            <person name="Madan Babu M."/>
            <person name="Madera M."/>
            <person name="Marchionni L."/>
            <person name="Matsuda H."/>
            <person name="Matsuzawa S."/>
            <person name="Miki H."/>
            <person name="Mignone F."/>
            <person name="Miyake S."/>
            <person name="Morris K."/>
            <person name="Mottagui-Tabar S."/>
            <person name="Mulder N."/>
            <person name="Nakano N."/>
            <person name="Nakauchi H."/>
            <person name="Ng P."/>
            <person name="Nilsson R."/>
            <person name="Nishiguchi S."/>
            <person name="Nishikawa S."/>
            <person name="Nori F."/>
            <person name="Ohara O."/>
            <person name="Okazaki Y."/>
            <person name="Orlando V."/>
            <person name="Pang K.C."/>
            <person name="Pavan W.J."/>
            <person name="Pavesi G."/>
            <person name="Pesole G."/>
            <person name="Petrovsky N."/>
            <person name="Piazza S."/>
            <person name="Reed J."/>
            <person name="Reid J.F."/>
            <person name="Ring B.Z."/>
            <person name="Ringwald M."/>
            <person name="Rost B."/>
            <person name="Ruan Y."/>
            <person name="Salzberg S.L."/>
            <person name="Sandelin A."/>
            <person name="Schneider C."/>
            <person name="Schoenbach C."/>
            <person name="Sekiguchi K."/>
            <person name="Semple C.A."/>
            <person name="Seno S."/>
            <person name="Sessa L."/>
            <person name="Sheng Y."/>
            <person name="Shibata Y."/>
            <person name="Shimada H."/>
            <person name="Shimada K."/>
            <person name="Silva D."/>
            <person name="Sinclair B."/>
            <person name="Sperling S."/>
            <person name="Stupka E."/>
            <person name="Sugiura K."/>
            <person name="Sultana R."/>
            <person name="Takenaka Y."/>
            <person name="Taki K."/>
            <person name="Tammoja K."/>
            <person name="Tan S.L."/>
            <person name="Tang S."/>
            <person name="Taylor M.S."/>
            <person name="Tegner J."/>
            <person name="Teichmann S.A."/>
            <person name="Ueda H.R."/>
            <person name="van Nimwegen E."/>
            <person name="Verardo R."/>
            <person name="Wei C.L."/>
            <person name="Yagi K."/>
            <person name="Yamanishi H."/>
            <person name="Zabarovsky E."/>
            <person name="Zhu S."/>
            <person name="Zimmer A."/>
            <person name="Hide W."/>
            <person name="Bult C."/>
            <person name="Grimmond S.M."/>
            <person name="Teasdale R.D."/>
            <person name="Liu E.T."/>
            <person name="Brusic V."/>
            <person name="Quackenbush J."/>
            <person name="Wahlestedt C."/>
            <person name="Mattick J.S."/>
            <person name="Hume D.A."/>
            <person name="Kai C."/>
            <person name="Sasaki D."/>
            <person name="Tomaru Y."/>
            <person name="Fukuda S."/>
            <person name="Kanamori-Katayama M."/>
            <person name="Suzuki M."/>
            <person name="Aoki J."/>
            <person name="Arakawa T."/>
            <person name="Iida J."/>
            <person name="Imamura K."/>
            <person name="Itoh M."/>
            <person name="Kato T."/>
            <person name="Kawaji H."/>
            <person name="Kawagashira N."/>
            <person name="Kawashima T."/>
            <person name="Kojima M."/>
            <person name="Kondo S."/>
            <person name="Konno H."/>
            <person name="Nakano K."/>
            <person name="Ninomiya N."/>
            <person name="Nishio T."/>
            <person name="Okada M."/>
            <person name="Plessy C."/>
            <person name="Shibata K."/>
            <person name="Shiraki T."/>
            <person name="Suzuki S."/>
            <person name="Tagami M."/>
            <person name="Waki K."/>
            <person name="Watahiki A."/>
            <person name="Okamura-Oho Y."/>
            <person name="Suzuki H."/>
            <person name="Kawai J."/>
            <person name="Hayashizaki Y."/>
        </authorList>
    </citation>
    <scope>NUCLEOTIDE SEQUENCE [LARGE SCALE MRNA] OF 1-460 (ISOFORM 2)</scope>
    <source>
        <strain>C57BL/6J</strain>
        <tissue>Oviduct</tissue>
    </source>
</reference>
<reference key="3">
    <citation type="journal article" date="2010" name="Cell">
        <title>A tissue-specific atlas of mouse protein phosphorylation and expression.</title>
        <authorList>
            <person name="Huttlin E.L."/>
            <person name="Jedrychowski M.P."/>
            <person name="Elias J.E."/>
            <person name="Goswami T."/>
            <person name="Rad R."/>
            <person name="Beausoleil S.A."/>
            <person name="Villen J."/>
            <person name="Haas W."/>
            <person name="Sowa M.E."/>
            <person name="Gygi S.P."/>
        </authorList>
    </citation>
    <scope>IDENTIFICATION BY MASS SPECTROMETRY [LARGE SCALE ANALYSIS]</scope>
    <source>
        <tissue>Brain</tissue>
    </source>
</reference>
<reference key="4">
    <citation type="journal article" date="2014" name="Mol. Cell. Proteomics">
        <title>Immunoaffinity enrichment and mass spectrometry analysis of protein methylation.</title>
        <authorList>
            <person name="Guo A."/>
            <person name="Gu H."/>
            <person name="Zhou J."/>
            <person name="Mulhern D."/>
            <person name="Wang Y."/>
            <person name="Lee K.A."/>
            <person name="Yang V."/>
            <person name="Aguiar M."/>
            <person name="Kornhauser J."/>
            <person name="Jia X."/>
            <person name="Ren J."/>
            <person name="Beausoleil S.A."/>
            <person name="Silva J.C."/>
            <person name="Vemulapalli V."/>
            <person name="Bedford M.T."/>
            <person name="Comb M.J."/>
        </authorList>
    </citation>
    <scope>METHYLATION [LARGE SCALE ANALYSIS] AT ARG-766</scope>
    <scope>IDENTIFICATION BY MASS SPECTROMETRY [LARGE SCALE ANALYSIS]</scope>
    <source>
        <tissue>Brain</tissue>
    </source>
</reference>
<keyword id="KW-0025">Alternative splicing</keyword>
<keyword id="KW-0175">Coiled coil</keyword>
<keyword id="KW-0344">Guanine-nucleotide releasing factor</keyword>
<keyword id="KW-0488">Methylation</keyword>
<keyword id="KW-1185">Reference proteome</keyword>
<organism>
    <name type="scientific">Mus musculus</name>
    <name type="common">Mouse</name>
    <dbReference type="NCBI Taxonomy" id="10090"/>
    <lineage>
        <taxon>Eukaryota</taxon>
        <taxon>Metazoa</taxon>
        <taxon>Chordata</taxon>
        <taxon>Craniata</taxon>
        <taxon>Vertebrata</taxon>
        <taxon>Euteleostomi</taxon>
        <taxon>Mammalia</taxon>
        <taxon>Eutheria</taxon>
        <taxon>Euarchontoglires</taxon>
        <taxon>Glires</taxon>
        <taxon>Rodentia</taxon>
        <taxon>Myomorpha</taxon>
        <taxon>Muroidea</taxon>
        <taxon>Muridae</taxon>
        <taxon>Murinae</taxon>
        <taxon>Mus</taxon>
        <taxon>Mus</taxon>
    </lineage>
</organism>
<protein>
    <recommendedName>
        <fullName>Rho guanine nucleotide exchange factor 33</fullName>
    </recommendedName>
</protein>
<comment type="alternative products">
    <event type="alternative splicing"/>
    <isoform>
        <id>Q8BW86-1</id>
        <name>1</name>
        <sequence type="displayed"/>
    </isoform>
    <isoform>
        <id>Q8BW86-2</id>
        <name>2</name>
        <sequence type="described" ref="VSP_039455"/>
    </isoform>
</comment>
<evidence type="ECO:0000255" key="1"/>
<evidence type="ECO:0000255" key="2">
    <source>
        <dbReference type="PROSITE-ProRule" id="PRU00062"/>
    </source>
</evidence>
<evidence type="ECO:0000256" key="3">
    <source>
        <dbReference type="SAM" id="MobiDB-lite"/>
    </source>
</evidence>
<evidence type="ECO:0000303" key="4">
    <source>
    </source>
</evidence>
<evidence type="ECO:0000305" key="5"/>
<evidence type="ECO:0007744" key="6">
    <source>
    </source>
</evidence>
<name>ARG33_MOUSE</name>
<proteinExistence type="evidence at protein level"/>
<gene>
    <name type="primary">Arhgef33</name>
    <name type="synonym">Gm941</name>
</gene>
<feature type="chain" id="PRO_0000342344" description="Rho guanine nucleotide exchange factor 33">
    <location>
        <begin position="1"/>
        <end position="850"/>
    </location>
</feature>
<feature type="domain" description="DH" evidence="2">
    <location>
        <begin position="273"/>
        <end position="448"/>
    </location>
</feature>
<feature type="region of interest" description="Disordered" evidence="3">
    <location>
        <begin position="1"/>
        <end position="21"/>
    </location>
</feature>
<feature type="region of interest" description="Disordered" evidence="3">
    <location>
        <begin position="98"/>
        <end position="209"/>
    </location>
</feature>
<feature type="region of interest" description="Disordered" evidence="3">
    <location>
        <begin position="504"/>
        <end position="550"/>
    </location>
</feature>
<feature type="region of interest" description="Disordered" evidence="3">
    <location>
        <begin position="702"/>
        <end position="850"/>
    </location>
</feature>
<feature type="coiled-coil region" evidence="1">
    <location>
        <begin position="54"/>
        <end position="128"/>
    </location>
</feature>
<feature type="compositionally biased region" description="Basic and acidic residues" evidence="3">
    <location>
        <begin position="1"/>
        <end position="13"/>
    </location>
</feature>
<feature type="compositionally biased region" description="Basic and acidic residues" evidence="3">
    <location>
        <begin position="98"/>
        <end position="113"/>
    </location>
</feature>
<feature type="compositionally biased region" description="Low complexity" evidence="3">
    <location>
        <begin position="130"/>
        <end position="149"/>
    </location>
</feature>
<feature type="compositionally biased region" description="Polar residues" evidence="3">
    <location>
        <begin position="164"/>
        <end position="175"/>
    </location>
</feature>
<feature type="compositionally biased region" description="Low complexity" evidence="3">
    <location>
        <begin position="510"/>
        <end position="520"/>
    </location>
</feature>
<feature type="compositionally biased region" description="Low complexity" evidence="3">
    <location>
        <begin position="754"/>
        <end position="770"/>
    </location>
</feature>
<feature type="compositionally biased region" description="Polar residues" evidence="3">
    <location>
        <begin position="773"/>
        <end position="783"/>
    </location>
</feature>
<feature type="compositionally biased region" description="Basic and acidic residues" evidence="3">
    <location>
        <begin position="784"/>
        <end position="806"/>
    </location>
</feature>
<feature type="compositionally biased region" description="Basic residues" evidence="3">
    <location>
        <begin position="826"/>
        <end position="835"/>
    </location>
</feature>
<feature type="modified residue" description="Omega-N-methylarginine" evidence="6">
    <location>
        <position position="766"/>
    </location>
</feature>
<feature type="splice variant" id="VSP_039455" description="In isoform 2." evidence="4">
    <location>
        <begin position="1"/>
        <end position="86"/>
    </location>
</feature>
<feature type="sequence conflict" description="In Ref. 2; BAC35600." evidence="5" ref="2">
    <original>F</original>
    <variation>L</variation>
    <location>
        <position position="165"/>
    </location>
</feature>